<name>ACP_XANOM</name>
<organism>
    <name type="scientific">Xanthomonas oryzae pv. oryzae (strain MAFF 311018)</name>
    <dbReference type="NCBI Taxonomy" id="342109"/>
    <lineage>
        <taxon>Bacteria</taxon>
        <taxon>Pseudomonadati</taxon>
        <taxon>Pseudomonadota</taxon>
        <taxon>Gammaproteobacteria</taxon>
        <taxon>Lysobacterales</taxon>
        <taxon>Lysobacteraceae</taxon>
        <taxon>Xanthomonas</taxon>
    </lineage>
</organism>
<evidence type="ECO:0000255" key="1">
    <source>
        <dbReference type="HAMAP-Rule" id="MF_01217"/>
    </source>
</evidence>
<evidence type="ECO:0000255" key="2">
    <source>
        <dbReference type="PROSITE-ProRule" id="PRU00258"/>
    </source>
</evidence>
<gene>
    <name evidence="1" type="primary">acpP</name>
    <name type="ordered locus">XOO0807</name>
</gene>
<feature type="chain" id="PRO_1000066719" description="Acyl carrier protein">
    <location>
        <begin position="1"/>
        <end position="79"/>
    </location>
</feature>
<feature type="domain" description="Carrier" evidence="2">
    <location>
        <begin position="2"/>
        <end position="77"/>
    </location>
</feature>
<feature type="modified residue" description="O-(pantetheine 4'-phosphoryl)serine" evidence="2">
    <location>
        <position position="37"/>
    </location>
</feature>
<protein>
    <recommendedName>
        <fullName evidence="1">Acyl carrier protein</fullName>
        <shortName evidence="1">ACP</shortName>
    </recommendedName>
</protein>
<accession>Q2P7B5</accession>
<dbReference type="EMBL" id="AP008229">
    <property type="protein sequence ID" value="BAE67562.1"/>
    <property type="molecule type" value="Genomic_DNA"/>
</dbReference>
<dbReference type="RefSeq" id="WP_010368407.1">
    <property type="nucleotide sequence ID" value="NC_007705.1"/>
</dbReference>
<dbReference type="SMR" id="Q2P7B5"/>
<dbReference type="GeneID" id="97210659"/>
<dbReference type="KEGG" id="xom:XOO0807"/>
<dbReference type="HOGENOM" id="CLU_108696_5_1_6"/>
<dbReference type="UniPathway" id="UPA00094"/>
<dbReference type="GO" id="GO:0005829">
    <property type="term" value="C:cytosol"/>
    <property type="evidence" value="ECO:0007669"/>
    <property type="project" value="TreeGrafter"/>
</dbReference>
<dbReference type="GO" id="GO:0016020">
    <property type="term" value="C:membrane"/>
    <property type="evidence" value="ECO:0007669"/>
    <property type="project" value="GOC"/>
</dbReference>
<dbReference type="GO" id="GO:0000035">
    <property type="term" value="F:acyl binding"/>
    <property type="evidence" value="ECO:0007669"/>
    <property type="project" value="TreeGrafter"/>
</dbReference>
<dbReference type="GO" id="GO:0000036">
    <property type="term" value="F:acyl carrier activity"/>
    <property type="evidence" value="ECO:0007669"/>
    <property type="project" value="UniProtKB-UniRule"/>
</dbReference>
<dbReference type="GO" id="GO:0009245">
    <property type="term" value="P:lipid A biosynthetic process"/>
    <property type="evidence" value="ECO:0007669"/>
    <property type="project" value="TreeGrafter"/>
</dbReference>
<dbReference type="FunFam" id="1.10.1200.10:FF:000001">
    <property type="entry name" value="Acyl carrier protein"/>
    <property type="match status" value="1"/>
</dbReference>
<dbReference type="Gene3D" id="1.10.1200.10">
    <property type="entry name" value="ACP-like"/>
    <property type="match status" value="1"/>
</dbReference>
<dbReference type="HAMAP" id="MF_01217">
    <property type="entry name" value="Acyl_carrier"/>
    <property type="match status" value="1"/>
</dbReference>
<dbReference type="InterPro" id="IPR003231">
    <property type="entry name" value="ACP"/>
</dbReference>
<dbReference type="InterPro" id="IPR036736">
    <property type="entry name" value="ACP-like_sf"/>
</dbReference>
<dbReference type="InterPro" id="IPR009081">
    <property type="entry name" value="PP-bd_ACP"/>
</dbReference>
<dbReference type="InterPro" id="IPR006162">
    <property type="entry name" value="Ppantetheine_attach_site"/>
</dbReference>
<dbReference type="NCBIfam" id="TIGR00517">
    <property type="entry name" value="acyl_carrier"/>
    <property type="match status" value="1"/>
</dbReference>
<dbReference type="NCBIfam" id="NF002148">
    <property type="entry name" value="PRK00982.1-2"/>
    <property type="match status" value="1"/>
</dbReference>
<dbReference type="NCBIfam" id="NF002149">
    <property type="entry name" value="PRK00982.1-3"/>
    <property type="match status" value="1"/>
</dbReference>
<dbReference type="NCBIfam" id="NF002150">
    <property type="entry name" value="PRK00982.1-4"/>
    <property type="match status" value="1"/>
</dbReference>
<dbReference type="NCBIfam" id="NF002151">
    <property type="entry name" value="PRK00982.1-5"/>
    <property type="match status" value="1"/>
</dbReference>
<dbReference type="PANTHER" id="PTHR20863">
    <property type="entry name" value="ACYL CARRIER PROTEIN"/>
    <property type="match status" value="1"/>
</dbReference>
<dbReference type="PANTHER" id="PTHR20863:SF76">
    <property type="entry name" value="CARRIER DOMAIN-CONTAINING PROTEIN"/>
    <property type="match status" value="1"/>
</dbReference>
<dbReference type="Pfam" id="PF00550">
    <property type="entry name" value="PP-binding"/>
    <property type="match status" value="1"/>
</dbReference>
<dbReference type="SUPFAM" id="SSF47336">
    <property type="entry name" value="ACP-like"/>
    <property type="match status" value="1"/>
</dbReference>
<dbReference type="PROSITE" id="PS50075">
    <property type="entry name" value="CARRIER"/>
    <property type="match status" value="1"/>
</dbReference>
<dbReference type="PROSITE" id="PS00012">
    <property type="entry name" value="PHOSPHOPANTETHEINE"/>
    <property type="match status" value="1"/>
</dbReference>
<proteinExistence type="inferred from homology"/>
<comment type="function">
    <text evidence="1">Carrier of the growing fatty acid chain in fatty acid biosynthesis.</text>
</comment>
<comment type="pathway">
    <text evidence="1">Lipid metabolism; fatty acid biosynthesis.</text>
</comment>
<comment type="subcellular location">
    <subcellularLocation>
        <location evidence="1">Cytoplasm</location>
    </subcellularLocation>
</comment>
<comment type="PTM">
    <text evidence="1">4'-phosphopantetheine is transferred from CoA to a specific serine of apo-ACP by AcpS. This modification is essential for activity because fatty acids are bound in thioester linkage to the sulfhydryl of the prosthetic group.</text>
</comment>
<comment type="similarity">
    <text evidence="1">Belongs to the acyl carrier protein (ACP) family.</text>
</comment>
<reference key="1">
    <citation type="journal article" date="2005" name="Jpn. Agric. Res. Q.">
        <title>Genome sequence of Xanthomonas oryzae pv. oryzae suggests contribution of large numbers of effector genes and insertion sequences to its race diversity.</title>
        <authorList>
            <person name="Ochiai H."/>
            <person name="Inoue Y."/>
            <person name="Takeya M."/>
            <person name="Sasaki A."/>
            <person name="Kaku H."/>
        </authorList>
    </citation>
    <scope>NUCLEOTIDE SEQUENCE [LARGE SCALE GENOMIC DNA]</scope>
    <source>
        <strain>MAFF 311018</strain>
    </source>
</reference>
<keyword id="KW-0963">Cytoplasm</keyword>
<keyword id="KW-0275">Fatty acid biosynthesis</keyword>
<keyword id="KW-0276">Fatty acid metabolism</keyword>
<keyword id="KW-0444">Lipid biosynthesis</keyword>
<keyword id="KW-0443">Lipid metabolism</keyword>
<keyword id="KW-0596">Phosphopantetheine</keyword>
<keyword id="KW-0597">Phosphoprotein</keyword>
<sequence>MSTIEERVKKIVVEQLGVKEEEVTTSASFVDDLGADSLDTVELVMALEEEFECEIPDEEAEKITSVQQAIDYVKSHVKS</sequence>